<dbReference type="EC" id="2.7.7.6" evidence="1"/>
<dbReference type="EMBL" id="AY958086">
    <property type="protein sequence ID" value="AAX45863.1"/>
    <property type="molecule type" value="Genomic_DNA"/>
</dbReference>
<dbReference type="RefSeq" id="YP_636565.1">
    <property type="nucleotide sequence ID" value="NC_008117.1"/>
</dbReference>
<dbReference type="SMR" id="Q32RG1"/>
<dbReference type="GeneID" id="4108183"/>
<dbReference type="GO" id="GO:0009507">
    <property type="term" value="C:chloroplast"/>
    <property type="evidence" value="ECO:0007669"/>
    <property type="project" value="UniProtKB-SubCell"/>
</dbReference>
<dbReference type="GO" id="GO:0000428">
    <property type="term" value="C:DNA-directed RNA polymerase complex"/>
    <property type="evidence" value="ECO:0007669"/>
    <property type="project" value="UniProtKB-KW"/>
</dbReference>
<dbReference type="GO" id="GO:0005739">
    <property type="term" value="C:mitochondrion"/>
    <property type="evidence" value="ECO:0007669"/>
    <property type="project" value="GOC"/>
</dbReference>
<dbReference type="GO" id="GO:0003677">
    <property type="term" value="F:DNA binding"/>
    <property type="evidence" value="ECO:0007669"/>
    <property type="project" value="UniProtKB-UniRule"/>
</dbReference>
<dbReference type="GO" id="GO:0003899">
    <property type="term" value="F:DNA-directed RNA polymerase activity"/>
    <property type="evidence" value="ECO:0007669"/>
    <property type="project" value="UniProtKB-UniRule"/>
</dbReference>
<dbReference type="GO" id="GO:0000287">
    <property type="term" value="F:magnesium ion binding"/>
    <property type="evidence" value="ECO:0007669"/>
    <property type="project" value="UniProtKB-UniRule"/>
</dbReference>
<dbReference type="GO" id="GO:0008270">
    <property type="term" value="F:zinc ion binding"/>
    <property type="evidence" value="ECO:0007669"/>
    <property type="project" value="UniProtKB-UniRule"/>
</dbReference>
<dbReference type="GO" id="GO:0006351">
    <property type="term" value="P:DNA-templated transcription"/>
    <property type="evidence" value="ECO:0007669"/>
    <property type="project" value="UniProtKB-UniRule"/>
</dbReference>
<dbReference type="Gene3D" id="1.10.40.90">
    <property type="match status" value="1"/>
</dbReference>
<dbReference type="Gene3D" id="2.40.40.20">
    <property type="match status" value="1"/>
</dbReference>
<dbReference type="Gene3D" id="4.10.860.120">
    <property type="entry name" value="RNA polymerase II, clamp domain"/>
    <property type="match status" value="1"/>
</dbReference>
<dbReference type="Gene3D" id="1.10.274.100">
    <property type="entry name" value="RNA polymerase Rpb1, domain 3"/>
    <property type="match status" value="1"/>
</dbReference>
<dbReference type="HAMAP" id="MF_01323">
    <property type="entry name" value="RNApol_bact_RpoC1"/>
    <property type="match status" value="1"/>
</dbReference>
<dbReference type="InterPro" id="IPR045867">
    <property type="entry name" value="DNA-dir_RpoC_beta_prime"/>
</dbReference>
<dbReference type="InterPro" id="IPR000722">
    <property type="entry name" value="RNA_pol_asu"/>
</dbReference>
<dbReference type="InterPro" id="IPR006592">
    <property type="entry name" value="RNA_pol_N"/>
</dbReference>
<dbReference type="InterPro" id="IPR007080">
    <property type="entry name" value="RNA_pol_Rpb1_1"/>
</dbReference>
<dbReference type="InterPro" id="IPR042102">
    <property type="entry name" value="RNA_pol_Rpb1_3_sf"/>
</dbReference>
<dbReference type="InterPro" id="IPR044893">
    <property type="entry name" value="RNA_pol_Rpb1_clamp_domain"/>
</dbReference>
<dbReference type="InterPro" id="IPR034678">
    <property type="entry name" value="RNApol_RpoC1"/>
</dbReference>
<dbReference type="PANTHER" id="PTHR19376">
    <property type="entry name" value="DNA-DIRECTED RNA POLYMERASE"/>
    <property type="match status" value="1"/>
</dbReference>
<dbReference type="PANTHER" id="PTHR19376:SF68">
    <property type="entry name" value="DNA-DIRECTED RNA POLYMERASE SUBUNIT BETA"/>
    <property type="match status" value="1"/>
</dbReference>
<dbReference type="Pfam" id="PF04997">
    <property type="entry name" value="RNA_pol_Rpb1_1"/>
    <property type="match status" value="1"/>
</dbReference>
<dbReference type="Pfam" id="PF00623">
    <property type="entry name" value="RNA_pol_Rpb1_2"/>
    <property type="match status" value="2"/>
</dbReference>
<dbReference type="SMART" id="SM00663">
    <property type="entry name" value="RPOLA_N"/>
    <property type="match status" value="1"/>
</dbReference>
<dbReference type="SUPFAM" id="SSF64484">
    <property type="entry name" value="beta and beta-prime subunits of DNA dependent RNA-polymerase"/>
    <property type="match status" value="1"/>
</dbReference>
<proteinExistence type="inferred from homology"/>
<geneLocation type="chloroplast"/>
<feature type="chain" id="PRO_0000225327" description="DNA-directed RNA polymerase subunit beta'">
    <location>
        <begin position="1"/>
        <end position="715"/>
    </location>
</feature>
<feature type="region of interest" description="Disordered" evidence="2">
    <location>
        <begin position="244"/>
        <end position="272"/>
    </location>
</feature>
<feature type="binding site" evidence="1">
    <location>
        <position position="69"/>
    </location>
    <ligand>
        <name>Zn(2+)</name>
        <dbReference type="ChEBI" id="CHEBI:29105"/>
    </ligand>
</feature>
<feature type="binding site" evidence="1">
    <location>
        <position position="71"/>
    </location>
    <ligand>
        <name>Zn(2+)</name>
        <dbReference type="ChEBI" id="CHEBI:29105"/>
    </ligand>
</feature>
<feature type="binding site" evidence="1">
    <location>
        <position position="87"/>
    </location>
    <ligand>
        <name>Zn(2+)</name>
        <dbReference type="ChEBI" id="CHEBI:29105"/>
    </ligand>
</feature>
<feature type="binding site" evidence="1">
    <location>
        <position position="90"/>
    </location>
    <ligand>
        <name>Zn(2+)</name>
        <dbReference type="ChEBI" id="CHEBI:29105"/>
    </ligand>
</feature>
<feature type="binding site" evidence="1">
    <location>
        <position position="520"/>
    </location>
    <ligand>
        <name>Mg(2+)</name>
        <dbReference type="ChEBI" id="CHEBI:18420"/>
    </ligand>
</feature>
<feature type="binding site" evidence="1">
    <location>
        <position position="522"/>
    </location>
    <ligand>
        <name>Mg(2+)</name>
        <dbReference type="ChEBI" id="CHEBI:18420"/>
    </ligand>
</feature>
<feature type="binding site" evidence="1">
    <location>
        <position position="524"/>
    </location>
    <ligand>
        <name>Mg(2+)</name>
        <dbReference type="ChEBI" id="CHEBI:18420"/>
    </ligand>
</feature>
<name>RPOC1_ZYGCR</name>
<accession>Q32RG1</accession>
<reference key="1">
    <citation type="journal article" date="2005" name="BMC Biol.">
        <title>The complete chloroplast DNA sequences of the charophycean green algae Staurastrum and Zygnema reveal that the chloroplast genome underwent extensive changes during the evolution of the Zygnematales.</title>
        <authorList>
            <person name="Turmel M."/>
            <person name="Otis C."/>
            <person name="Lemieux C."/>
        </authorList>
    </citation>
    <scope>NUCLEOTIDE SEQUENCE [LARGE SCALE GENOMIC DNA]</scope>
</reference>
<organism>
    <name type="scientific">Zygnema circumcarinatum</name>
    <name type="common">Green alga</name>
    <dbReference type="NCBI Taxonomy" id="35869"/>
    <lineage>
        <taxon>Eukaryota</taxon>
        <taxon>Viridiplantae</taxon>
        <taxon>Streptophyta</taxon>
        <taxon>Zygnematophyceae</taxon>
        <taxon>Zygnematophycidae</taxon>
        <taxon>Zygnematales</taxon>
        <taxon>Zygnemataceae</taxon>
        <taxon>Zygnema</taxon>
    </lineage>
</organism>
<gene>
    <name evidence="1" type="primary">rpoC1</name>
</gene>
<keyword id="KW-0150">Chloroplast</keyword>
<keyword id="KW-0240">DNA-directed RNA polymerase</keyword>
<keyword id="KW-0460">Magnesium</keyword>
<keyword id="KW-0479">Metal-binding</keyword>
<keyword id="KW-0548">Nucleotidyltransferase</keyword>
<keyword id="KW-0934">Plastid</keyword>
<keyword id="KW-0804">Transcription</keyword>
<keyword id="KW-0808">Transferase</keyword>
<keyword id="KW-0862">Zinc</keyword>
<sequence>MIPEDHLQYIRIGLASPEQIRSWAERRLPNGELIGRVSKPYTIHYQTHKPEKDGLFCERVFGPIKSGVCACGKYQGTISTKDSPKYCEKCGVEFTEARVRRHRMGYIDLQCPVTHVWYLKNRPSVIARLLNQPLQDIESLVYYDSFLARPVTNEPTLIRLLPTQSKLYKDRSQSTFDKPLELFLFDEPWQSALSNFFSPKWFHLIQIREMLTGADVIHKLLSGLNLTNAMFHARNQWKHLAKKAPESQSEVIEAQGPVPQAEEEKQRDQSIQQQKDAVLRRITLIRDLLQSQTQPEWMVLRTLPVLPPDLRPILELKDGQLIRSDLNELYRRVLYRNQLICQFSVEDPFCISMMQKKLLQQAIDSLLANGAGGNIIRDRNMRPYKSLSDIIKGKKGRFRENLLGKRVDYSGRSVIVVGPYLSLYQCGLPREMAIELFQPFVIRGLIINHFARNPRAAKSMIQRRHPIVWKILKMIVDDHLVILNRAPTLHRLGVQAFQPVLVRERAIHLHPLVCTGFNADFDGDQMAVHVPLSLEAQAEAHLLMSPYFNLLSPGTGDAIVVPTQDMLLGLYALTLGATLGIYSNINTYKYQSDVSFTQKTDSKIITFSNFSDALTAYHQGIITSDLPIWLYCRPEIAVMNNSQGDCPVEAQYQPKGIYLNVYEHSQIRTDKLGKTVQKYIRTTAGRAVLNQQIEQAIQGTEHAYKAVKQLNIILN</sequence>
<protein>
    <recommendedName>
        <fullName evidence="1">DNA-directed RNA polymerase subunit beta'</fullName>
        <ecNumber evidence="1">2.7.7.6</ecNumber>
    </recommendedName>
    <alternativeName>
        <fullName evidence="1">PEP</fullName>
    </alternativeName>
    <alternativeName>
        <fullName evidence="1">Plastid-encoded RNA polymerase subunit beta'</fullName>
        <shortName evidence="1">RNA polymerase subunit beta'</shortName>
    </alternativeName>
</protein>
<comment type="function">
    <text evidence="1">DNA-dependent RNA polymerase catalyzes the transcription of DNA into RNA using the four ribonucleoside triphosphates as substrates.</text>
</comment>
<comment type="catalytic activity">
    <reaction evidence="1">
        <text>RNA(n) + a ribonucleoside 5'-triphosphate = RNA(n+1) + diphosphate</text>
        <dbReference type="Rhea" id="RHEA:21248"/>
        <dbReference type="Rhea" id="RHEA-COMP:14527"/>
        <dbReference type="Rhea" id="RHEA-COMP:17342"/>
        <dbReference type="ChEBI" id="CHEBI:33019"/>
        <dbReference type="ChEBI" id="CHEBI:61557"/>
        <dbReference type="ChEBI" id="CHEBI:140395"/>
        <dbReference type="EC" id="2.7.7.6"/>
    </reaction>
</comment>
<comment type="cofactor">
    <cofactor evidence="1">
        <name>Mg(2+)</name>
        <dbReference type="ChEBI" id="CHEBI:18420"/>
    </cofactor>
    <text evidence="1">Binds 1 Mg(2+) ion per subunit.</text>
</comment>
<comment type="cofactor">
    <cofactor evidence="1">
        <name>Zn(2+)</name>
        <dbReference type="ChEBI" id="CHEBI:29105"/>
    </cofactor>
    <text evidence="1">Binds 1 Zn(2+) ion per subunit.</text>
</comment>
<comment type="subunit">
    <text evidence="1">In plastids the minimal PEP RNA polymerase catalytic core is composed of four subunits: alpha, beta, beta', and beta''. When a (nuclear-encoded) sigma factor is associated with the core the holoenzyme is formed, which can initiate transcription.</text>
</comment>
<comment type="subcellular location">
    <subcellularLocation>
        <location evidence="1">Plastid</location>
        <location evidence="1">Chloroplast</location>
    </subcellularLocation>
</comment>
<comment type="similarity">
    <text evidence="1">Belongs to the RNA polymerase beta' chain family. RpoC1 subfamily.</text>
</comment>
<evidence type="ECO:0000255" key="1">
    <source>
        <dbReference type="HAMAP-Rule" id="MF_01323"/>
    </source>
</evidence>
<evidence type="ECO:0000256" key="2">
    <source>
        <dbReference type="SAM" id="MobiDB-lite"/>
    </source>
</evidence>